<dbReference type="EC" id="2.4.2.9" evidence="1"/>
<dbReference type="EMBL" id="AE004439">
    <property type="protein sequence ID" value="AAK02103.1"/>
    <property type="molecule type" value="Genomic_DNA"/>
</dbReference>
<dbReference type="RefSeq" id="WP_005721349.1">
    <property type="nucleotide sequence ID" value="NC_002663.1"/>
</dbReference>
<dbReference type="SMR" id="Q9CPL8"/>
<dbReference type="STRING" id="272843.PM0019"/>
<dbReference type="EnsemblBacteria" id="AAK02103">
    <property type="protein sequence ID" value="AAK02103"/>
    <property type="gene ID" value="PM0019"/>
</dbReference>
<dbReference type="GeneID" id="77207359"/>
<dbReference type="KEGG" id="pmu:PM0019"/>
<dbReference type="HOGENOM" id="CLU_067096_2_2_6"/>
<dbReference type="OrthoDB" id="9781675at2"/>
<dbReference type="UniPathway" id="UPA00574">
    <property type="reaction ID" value="UER00636"/>
</dbReference>
<dbReference type="Proteomes" id="UP000000809">
    <property type="component" value="Chromosome"/>
</dbReference>
<dbReference type="GO" id="GO:0005525">
    <property type="term" value="F:GTP binding"/>
    <property type="evidence" value="ECO:0007669"/>
    <property type="project" value="UniProtKB-KW"/>
</dbReference>
<dbReference type="GO" id="GO:0000287">
    <property type="term" value="F:magnesium ion binding"/>
    <property type="evidence" value="ECO:0007669"/>
    <property type="project" value="UniProtKB-UniRule"/>
</dbReference>
<dbReference type="GO" id="GO:0004845">
    <property type="term" value="F:uracil phosphoribosyltransferase activity"/>
    <property type="evidence" value="ECO:0007669"/>
    <property type="project" value="UniProtKB-UniRule"/>
</dbReference>
<dbReference type="GO" id="GO:0044206">
    <property type="term" value="P:UMP salvage"/>
    <property type="evidence" value="ECO:0007669"/>
    <property type="project" value="UniProtKB-UniRule"/>
</dbReference>
<dbReference type="GO" id="GO:0006223">
    <property type="term" value="P:uracil salvage"/>
    <property type="evidence" value="ECO:0007669"/>
    <property type="project" value="InterPro"/>
</dbReference>
<dbReference type="CDD" id="cd06223">
    <property type="entry name" value="PRTases_typeI"/>
    <property type="match status" value="1"/>
</dbReference>
<dbReference type="FunFam" id="3.40.50.2020:FF:000003">
    <property type="entry name" value="Uracil phosphoribosyltransferase"/>
    <property type="match status" value="1"/>
</dbReference>
<dbReference type="Gene3D" id="3.40.50.2020">
    <property type="match status" value="1"/>
</dbReference>
<dbReference type="HAMAP" id="MF_01218_B">
    <property type="entry name" value="Upp_B"/>
    <property type="match status" value="1"/>
</dbReference>
<dbReference type="InterPro" id="IPR000836">
    <property type="entry name" value="PRibTrfase_dom"/>
</dbReference>
<dbReference type="InterPro" id="IPR029057">
    <property type="entry name" value="PRTase-like"/>
</dbReference>
<dbReference type="InterPro" id="IPR034332">
    <property type="entry name" value="Upp_B"/>
</dbReference>
<dbReference type="InterPro" id="IPR050054">
    <property type="entry name" value="UPRTase/APRTase"/>
</dbReference>
<dbReference type="InterPro" id="IPR005765">
    <property type="entry name" value="Ura_phspho_trans"/>
</dbReference>
<dbReference type="NCBIfam" id="NF001097">
    <property type="entry name" value="PRK00129.1"/>
    <property type="match status" value="1"/>
</dbReference>
<dbReference type="NCBIfam" id="TIGR01091">
    <property type="entry name" value="upp"/>
    <property type="match status" value="1"/>
</dbReference>
<dbReference type="PANTHER" id="PTHR32315">
    <property type="entry name" value="ADENINE PHOSPHORIBOSYLTRANSFERASE"/>
    <property type="match status" value="1"/>
</dbReference>
<dbReference type="PANTHER" id="PTHR32315:SF4">
    <property type="entry name" value="URACIL PHOSPHORIBOSYLTRANSFERASE, CHLOROPLASTIC"/>
    <property type="match status" value="1"/>
</dbReference>
<dbReference type="Pfam" id="PF14681">
    <property type="entry name" value="UPRTase"/>
    <property type="match status" value="1"/>
</dbReference>
<dbReference type="SUPFAM" id="SSF53271">
    <property type="entry name" value="PRTase-like"/>
    <property type="match status" value="1"/>
</dbReference>
<gene>
    <name evidence="1" type="primary">upp</name>
    <name type="ordered locus">PM0019</name>
</gene>
<reference key="1">
    <citation type="journal article" date="2001" name="Proc. Natl. Acad. Sci. U.S.A.">
        <title>Complete genomic sequence of Pasteurella multocida Pm70.</title>
        <authorList>
            <person name="May B.J."/>
            <person name="Zhang Q."/>
            <person name="Li L.L."/>
            <person name="Paustian M.L."/>
            <person name="Whittam T.S."/>
            <person name="Kapur V."/>
        </authorList>
    </citation>
    <scope>NUCLEOTIDE SEQUENCE [LARGE SCALE GENOMIC DNA]</scope>
    <source>
        <strain>Pm70</strain>
    </source>
</reference>
<proteinExistence type="inferred from homology"/>
<protein>
    <recommendedName>
        <fullName evidence="1">Uracil phosphoribosyltransferase</fullName>
        <ecNumber evidence="1">2.4.2.9</ecNumber>
    </recommendedName>
    <alternativeName>
        <fullName evidence="1">UMP pyrophosphorylase</fullName>
    </alternativeName>
    <alternativeName>
        <fullName evidence="1">UPRTase</fullName>
    </alternativeName>
</protein>
<comment type="function">
    <text evidence="1">Catalyzes the conversion of uracil and 5-phospho-alpha-D-ribose 1-diphosphate (PRPP) to UMP and diphosphate.</text>
</comment>
<comment type="catalytic activity">
    <reaction evidence="1">
        <text>UMP + diphosphate = 5-phospho-alpha-D-ribose 1-diphosphate + uracil</text>
        <dbReference type="Rhea" id="RHEA:13017"/>
        <dbReference type="ChEBI" id="CHEBI:17568"/>
        <dbReference type="ChEBI" id="CHEBI:33019"/>
        <dbReference type="ChEBI" id="CHEBI:57865"/>
        <dbReference type="ChEBI" id="CHEBI:58017"/>
        <dbReference type="EC" id="2.4.2.9"/>
    </reaction>
</comment>
<comment type="cofactor">
    <cofactor evidence="1">
        <name>Mg(2+)</name>
        <dbReference type="ChEBI" id="CHEBI:18420"/>
    </cofactor>
    <text evidence="1">Binds 1 Mg(2+) ion per subunit. The magnesium is bound as Mg-PRPP.</text>
</comment>
<comment type="activity regulation">
    <text evidence="1">Allosterically activated by GTP.</text>
</comment>
<comment type="pathway">
    <text evidence="1">Pyrimidine metabolism; UMP biosynthesis via salvage pathway; UMP from uracil: step 1/1.</text>
</comment>
<comment type="similarity">
    <text evidence="1">Belongs to the UPRTase family.</text>
</comment>
<feature type="chain" id="PRO_0000120864" description="Uracil phosphoribosyltransferase">
    <location>
        <begin position="1"/>
        <end position="208"/>
    </location>
</feature>
<feature type="binding site" evidence="1">
    <location>
        <position position="78"/>
    </location>
    <ligand>
        <name>5-phospho-alpha-D-ribose 1-diphosphate</name>
        <dbReference type="ChEBI" id="CHEBI:58017"/>
    </ligand>
</feature>
<feature type="binding site" evidence="1">
    <location>
        <position position="103"/>
    </location>
    <ligand>
        <name>5-phospho-alpha-D-ribose 1-diphosphate</name>
        <dbReference type="ChEBI" id="CHEBI:58017"/>
    </ligand>
</feature>
<feature type="binding site" evidence="1">
    <location>
        <begin position="130"/>
        <end position="138"/>
    </location>
    <ligand>
        <name>5-phospho-alpha-D-ribose 1-diphosphate</name>
        <dbReference type="ChEBI" id="CHEBI:58017"/>
    </ligand>
</feature>
<feature type="binding site" evidence="1">
    <location>
        <position position="193"/>
    </location>
    <ligand>
        <name>uracil</name>
        <dbReference type="ChEBI" id="CHEBI:17568"/>
    </ligand>
</feature>
<feature type="binding site" evidence="1">
    <location>
        <begin position="198"/>
        <end position="200"/>
    </location>
    <ligand>
        <name>uracil</name>
        <dbReference type="ChEBI" id="CHEBI:17568"/>
    </ligand>
</feature>
<feature type="binding site" evidence="1">
    <location>
        <position position="199"/>
    </location>
    <ligand>
        <name>5-phospho-alpha-D-ribose 1-diphosphate</name>
        <dbReference type="ChEBI" id="CHEBI:58017"/>
    </ligand>
</feature>
<sequence>MKLVQVQHPLVKHKLGLMRSAEINTKKFRELATEVGSLLTYEATADLETEKVIIDGWCGPVEIDQIKGKKVTVVPILRAGLGMMDGVLEHVPSARISVVGMYRDEETLEPVPYFQKLASDLEERLAIVVDPMLATGGSMIATIDLLKAKGCKHIKVLVLVAAPEGIKALEAAHPDIELYTASVDSHLNEQGYIIPGLGDAGDKIFGTK</sequence>
<evidence type="ECO:0000255" key="1">
    <source>
        <dbReference type="HAMAP-Rule" id="MF_01218"/>
    </source>
</evidence>
<accession>Q9CPL8</accession>
<organism>
    <name type="scientific">Pasteurella multocida (strain Pm70)</name>
    <dbReference type="NCBI Taxonomy" id="272843"/>
    <lineage>
        <taxon>Bacteria</taxon>
        <taxon>Pseudomonadati</taxon>
        <taxon>Pseudomonadota</taxon>
        <taxon>Gammaproteobacteria</taxon>
        <taxon>Pasteurellales</taxon>
        <taxon>Pasteurellaceae</taxon>
        <taxon>Pasteurella</taxon>
    </lineage>
</organism>
<name>UPP_PASMU</name>
<keyword id="KW-0021">Allosteric enzyme</keyword>
<keyword id="KW-0328">Glycosyltransferase</keyword>
<keyword id="KW-0342">GTP-binding</keyword>
<keyword id="KW-0460">Magnesium</keyword>
<keyword id="KW-0547">Nucleotide-binding</keyword>
<keyword id="KW-1185">Reference proteome</keyword>
<keyword id="KW-0808">Transferase</keyword>